<organism>
    <name type="scientific">Klebsiella pneumoniae (strain 342)</name>
    <dbReference type="NCBI Taxonomy" id="507522"/>
    <lineage>
        <taxon>Bacteria</taxon>
        <taxon>Pseudomonadati</taxon>
        <taxon>Pseudomonadota</taxon>
        <taxon>Gammaproteobacteria</taxon>
        <taxon>Enterobacterales</taxon>
        <taxon>Enterobacteriaceae</taxon>
        <taxon>Klebsiella/Raoultella group</taxon>
        <taxon>Klebsiella</taxon>
        <taxon>Klebsiella pneumoniae complex</taxon>
    </lineage>
</organism>
<feature type="chain" id="PRO_1000190159" description="Glycerol-3-phosphate dehydrogenase [NAD(P)+]">
    <location>
        <begin position="1"/>
        <end position="339"/>
    </location>
</feature>
<feature type="active site" description="Proton acceptor" evidence="1">
    <location>
        <position position="195"/>
    </location>
</feature>
<feature type="binding site" evidence="1">
    <location>
        <position position="15"/>
    </location>
    <ligand>
        <name>NADPH</name>
        <dbReference type="ChEBI" id="CHEBI:57783"/>
    </ligand>
</feature>
<feature type="binding site" evidence="1">
    <location>
        <position position="16"/>
    </location>
    <ligand>
        <name>NADPH</name>
        <dbReference type="ChEBI" id="CHEBI:57783"/>
    </ligand>
</feature>
<feature type="binding site" evidence="1">
    <location>
        <position position="36"/>
    </location>
    <ligand>
        <name>NADPH</name>
        <dbReference type="ChEBI" id="CHEBI:57783"/>
    </ligand>
</feature>
<feature type="binding site" evidence="1">
    <location>
        <position position="110"/>
    </location>
    <ligand>
        <name>NADPH</name>
        <dbReference type="ChEBI" id="CHEBI:57783"/>
    </ligand>
</feature>
<feature type="binding site" evidence="1">
    <location>
        <position position="110"/>
    </location>
    <ligand>
        <name>sn-glycerol 3-phosphate</name>
        <dbReference type="ChEBI" id="CHEBI:57597"/>
    </ligand>
</feature>
<feature type="binding site" evidence="1">
    <location>
        <position position="139"/>
    </location>
    <ligand>
        <name>sn-glycerol 3-phosphate</name>
        <dbReference type="ChEBI" id="CHEBI:57597"/>
    </ligand>
</feature>
<feature type="binding site" evidence="1">
    <location>
        <position position="141"/>
    </location>
    <ligand>
        <name>sn-glycerol 3-phosphate</name>
        <dbReference type="ChEBI" id="CHEBI:57597"/>
    </ligand>
</feature>
<feature type="binding site" evidence="1">
    <location>
        <position position="143"/>
    </location>
    <ligand>
        <name>NADPH</name>
        <dbReference type="ChEBI" id="CHEBI:57783"/>
    </ligand>
</feature>
<feature type="binding site" evidence="1">
    <location>
        <position position="195"/>
    </location>
    <ligand>
        <name>sn-glycerol 3-phosphate</name>
        <dbReference type="ChEBI" id="CHEBI:57597"/>
    </ligand>
</feature>
<feature type="binding site" evidence="1">
    <location>
        <position position="248"/>
    </location>
    <ligand>
        <name>sn-glycerol 3-phosphate</name>
        <dbReference type="ChEBI" id="CHEBI:57597"/>
    </ligand>
</feature>
<feature type="binding site" evidence="1">
    <location>
        <position position="258"/>
    </location>
    <ligand>
        <name>sn-glycerol 3-phosphate</name>
        <dbReference type="ChEBI" id="CHEBI:57597"/>
    </ligand>
</feature>
<feature type="binding site" evidence="1">
    <location>
        <position position="259"/>
    </location>
    <ligand>
        <name>NADPH</name>
        <dbReference type="ChEBI" id="CHEBI:57783"/>
    </ligand>
</feature>
<feature type="binding site" evidence="1">
    <location>
        <position position="259"/>
    </location>
    <ligand>
        <name>sn-glycerol 3-phosphate</name>
        <dbReference type="ChEBI" id="CHEBI:57597"/>
    </ligand>
</feature>
<feature type="binding site" evidence="1">
    <location>
        <position position="260"/>
    </location>
    <ligand>
        <name>sn-glycerol 3-phosphate</name>
        <dbReference type="ChEBI" id="CHEBI:57597"/>
    </ligand>
</feature>
<feature type="binding site" evidence="1">
    <location>
        <position position="283"/>
    </location>
    <ligand>
        <name>NADPH</name>
        <dbReference type="ChEBI" id="CHEBI:57783"/>
    </ligand>
</feature>
<feature type="binding site" evidence="1">
    <location>
        <position position="285"/>
    </location>
    <ligand>
        <name>NADPH</name>
        <dbReference type="ChEBI" id="CHEBI:57783"/>
    </ligand>
</feature>
<dbReference type="EC" id="1.1.1.94" evidence="1"/>
<dbReference type="EMBL" id="CP000964">
    <property type="protein sequence ID" value="ACI07836.1"/>
    <property type="molecule type" value="Genomic_DNA"/>
</dbReference>
<dbReference type="SMR" id="B5XTJ2"/>
<dbReference type="KEGG" id="kpe:KPK_0143"/>
<dbReference type="HOGENOM" id="CLU_033449_0_2_6"/>
<dbReference type="UniPathway" id="UPA00940"/>
<dbReference type="Proteomes" id="UP000001734">
    <property type="component" value="Chromosome"/>
</dbReference>
<dbReference type="GO" id="GO:0005829">
    <property type="term" value="C:cytosol"/>
    <property type="evidence" value="ECO:0007669"/>
    <property type="project" value="TreeGrafter"/>
</dbReference>
<dbReference type="GO" id="GO:0047952">
    <property type="term" value="F:glycerol-3-phosphate dehydrogenase [NAD(P)+] activity"/>
    <property type="evidence" value="ECO:0007669"/>
    <property type="project" value="UniProtKB-UniRule"/>
</dbReference>
<dbReference type="GO" id="GO:0051287">
    <property type="term" value="F:NAD binding"/>
    <property type="evidence" value="ECO:0007669"/>
    <property type="project" value="InterPro"/>
</dbReference>
<dbReference type="GO" id="GO:0005975">
    <property type="term" value="P:carbohydrate metabolic process"/>
    <property type="evidence" value="ECO:0007669"/>
    <property type="project" value="InterPro"/>
</dbReference>
<dbReference type="GO" id="GO:0046167">
    <property type="term" value="P:glycerol-3-phosphate biosynthetic process"/>
    <property type="evidence" value="ECO:0007669"/>
    <property type="project" value="UniProtKB-UniRule"/>
</dbReference>
<dbReference type="GO" id="GO:0046168">
    <property type="term" value="P:glycerol-3-phosphate catabolic process"/>
    <property type="evidence" value="ECO:0007669"/>
    <property type="project" value="InterPro"/>
</dbReference>
<dbReference type="GO" id="GO:0046474">
    <property type="term" value="P:glycerophospholipid biosynthetic process"/>
    <property type="evidence" value="ECO:0007669"/>
    <property type="project" value="TreeGrafter"/>
</dbReference>
<dbReference type="FunFam" id="1.10.1040.10:FF:000001">
    <property type="entry name" value="Glycerol-3-phosphate dehydrogenase [NAD(P)+]"/>
    <property type="match status" value="1"/>
</dbReference>
<dbReference type="FunFam" id="3.40.50.720:FF:000019">
    <property type="entry name" value="Glycerol-3-phosphate dehydrogenase [NAD(P)+]"/>
    <property type="match status" value="1"/>
</dbReference>
<dbReference type="Gene3D" id="1.10.1040.10">
    <property type="entry name" value="N-(1-d-carboxylethyl)-l-norvaline Dehydrogenase, domain 2"/>
    <property type="match status" value="1"/>
</dbReference>
<dbReference type="Gene3D" id="3.40.50.720">
    <property type="entry name" value="NAD(P)-binding Rossmann-like Domain"/>
    <property type="match status" value="1"/>
</dbReference>
<dbReference type="HAMAP" id="MF_00394">
    <property type="entry name" value="NAD_Glyc3P_dehydrog"/>
    <property type="match status" value="1"/>
</dbReference>
<dbReference type="InterPro" id="IPR008927">
    <property type="entry name" value="6-PGluconate_DH-like_C_sf"/>
</dbReference>
<dbReference type="InterPro" id="IPR013328">
    <property type="entry name" value="6PGD_dom2"/>
</dbReference>
<dbReference type="InterPro" id="IPR006168">
    <property type="entry name" value="G3P_DH_NAD-dep"/>
</dbReference>
<dbReference type="InterPro" id="IPR006109">
    <property type="entry name" value="G3P_DH_NAD-dep_C"/>
</dbReference>
<dbReference type="InterPro" id="IPR011128">
    <property type="entry name" value="G3P_DH_NAD-dep_N"/>
</dbReference>
<dbReference type="InterPro" id="IPR036291">
    <property type="entry name" value="NAD(P)-bd_dom_sf"/>
</dbReference>
<dbReference type="NCBIfam" id="NF000939">
    <property type="entry name" value="PRK00094.1-1"/>
    <property type="match status" value="1"/>
</dbReference>
<dbReference type="NCBIfam" id="NF000940">
    <property type="entry name" value="PRK00094.1-2"/>
    <property type="match status" value="1"/>
</dbReference>
<dbReference type="NCBIfam" id="NF000942">
    <property type="entry name" value="PRK00094.1-4"/>
    <property type="match status" value="1"/>
</dbReference>
<dbReference type="PANTHER" id="PTHR11728">
    <property type="entry name" value="GLYCEROL-3-PHOSPHATE DEHYDROGENASE"/>
    <property type="match status" value="1"/>
</dbReference>
<dbReference type="PANTHER" id="PTHR11728:SF1">
    <property type="entry name" value="GLYCEROL-3-PHOSPHATE DEHYDROGENASE [NAD(+)] 2, CHLOROPLASTIC"/>
    <property type="match status" value="1"/>
</dbReference>
<dbReference type="Pfam" id="PF07479">
    <property type="entry name" value="NAD_Gly3P_dh_C"/>
    <property type="match status" value="1"/>
</dbReference>
<dbReference type="Pfam" id="PF01210">
    <property type="entry name" value="NAD_Gly3P_dh_N"/>
    <property type="match status" value="1"/>
</dbReference>
<dbReference type="PIRSF" id="PIRSF000114">
    <property type="entry name" value="Glycerol-3-P_dh"/>
    <property type="match status" value="1"/>
</dbReference>
<dbReference type="PRINTS" id="PR00077">
    <property type="entry name" value="GPDHDRGNASE"/>
</dbReference>
<dbReference type="SUPFAM" id="SSF48179">
    <property type="entry name" value="6-phosphogluconate dehydrogenase C-terminal domain-like"/>
    <property type="match status" value="1"/>
</dbReference>
<dbReference type="SUPFAM" id="SSF51735">
    <property type="entry name" value="NAD(P)-binding Rossmann-fold domains"/>
    <property type="match status" value="1"/>
</dbReference>
<dbReference type="PROSITE" id="PS00957">
    <property type="entry name" value="NAD_G3PDH"/>
    <property type="match status" value="1"/>
</dbReference>
<name>GPDA_KLEP3</name>
<comment type="function">
    <text evidence="1">Catalyzes the reduction of the glycolytic intermediate dihydroxyacetone phosphate (DHAP) to sn-glycerol 3-phosphate (G3P), the key precursor for phospholipid synthesis.</text>
</comment>
<comment type="catalytic activity">
    <reaction evidence="1">
        <text>sn-glycerol 3-phosphate + NAD(+) = dihydroxyacetone phosphate + NADH + H(+)</text>
        <dbReference type="Rhea" id="RHEA:11092"/>
        <dbReference type="ChEBI" id="CHEBI:15378"/>
        <dbReference type="ChEBI" id="CHEBI:57540"/>
        <dbReference type="ChEBI" id="CHEBI:57597"/>
        <dbReference type="ChEBI" id="CHEBI:57642"/>
        <dbReference type="ChEBI" id="CHEBI:57945"/>
        <dbReference type="EC" id="1.1.1.94"/>
    </reaction>
    <physiologicalReaction direction="right-to-left" evidence="1">
        <dbReference type="Rhea" id="RHEA:11094"/>
    </physiologicalReaction>
</comment>
<comment type="catalytic activity">
    <reaction evidence="1">
        <text>sn-glycerol 3-phosphate + NADP(+) = dihydroxyacetone phosphate + NADPH + H(+)</text>
        <dbReference type="Rhea" id="RHEA:11096"/>
        <dbReference type="ChEBI" id="CHEBI:15378"/>
        <dbReference type="ChEBI" id="CHEBI:57597"/>
        <dbReference type="ChEBI" id="CHEBI:57642"/>
        <dbReference type="ChEBI" id="CHEBI:57783"/>
        <dbReference type="ChEBI" id="CHEBI:58349"/>
        <dbReference type="EC" id="1.1.1.94"/>
    </reaction>
    <physiologicalReaction direction="right-to-left" evidence="1">
        <dbReference type="Rhea" id="RHEA:11098"/>
    </physiologicalReaction>
</comment>
<comment type="pathway">
    <text evidence="1">Membrane lipid metabolism; glycerophospholipid metabolism.</text>
</comment>
<comment type="subcellular location">
    <subcellularLocation>
        <location evidence="1">Cytoplasm</location>
    </subcellularLocation>
</comment>
<comment type="similarity">
    <text evidence="1">Belongs to the NAD-dependent glycerol-3-phosphate dehydrogenase family.</text>
</comment>
<proteinExistence type="inferred from homology"/>
<gene>
    <name evidence="1" type="primary">gpsA</name>
    <name type="ordered locus">KPK_0143</name>
</gene>
<reference key="1">
    <citation type="journal article" date="2008" name="PLoS Genet.">
        <title>Complete genome sequence of the N2-fixing broad host range endophyte Klebsiella pneumoniae 342 and virulence predictions verified in mice.</title>
        <authorList>
            <person name="Fouts D.E."/>
            <person name="Tyler H.L."/>
            <person name="DeBoy R.T."/>
            <person name="Daugherty S."/>
            <person name="Ren Q."/>
            <person name="Badger J.H."/>
            <person name="Durkin A.S."/>
            <person name="Huot H."/>
            <person name="Shrivastava S."/>
            <person name="Kothari S."/>
            <person name="Dodson R.J."/>
            <person name="Mohamoud Y."/>
            <person name="Khouri H."/>
            <person name="Roesch L.F.W."/>
            <person name="Krogfelt K.A."/>
            <person name="Struve C."/>
            <person name="Triplett E.W."/>
            <person name="Methe B.A."/>
        </authorList>
    </citation>
    <scope>NUCLEOTIDE SEQUENCE [LARGE SCALE GENOMIC DNA]</scope>
    <source>
        <strain>342</strain>
    </source>
</reference>
<keyword id="KW-0963">Cytoplasm</keyword>
<keyword id="KW-0444">Lipid biosynthesis</keyword>
<keyword id="KW-0443">Lipid metabolism</keyword>
<keyword id="KW-0520">NAD</keyword>
<keyword id="KW-0521">NADP</keyword>
<keyword id="KW-0547">Nucleotide-binding</keyword>
<keyword id="KW-0560">Oxidoreductase</keyword>
<keyword id="KW-0594">Phospholipid biosynthesis</keyword>
<keyword id="KW-1208">Phospholipid metabolism</keyword>
<sequence length="339" mass="36238">MNALNAAMTVIGAGSYGTALAITLARNGHHVVLWGHDPKHIATLQHDRCNAAFLPDVPFPDTLHLESDLATALAASRDILIVVPSHVFGQVLRQIKPLMRPDARLVWATKGLEAETGRLLQDVAREALGDDIPLAVISGPTFAKELAAGLPTAISLAATDPQFAEDLQHLLHCGKSFRVYINPDFIGVQLGGAVKNVIAIGAGMSDGIGFGANARTALITRGLVEMSRLGAALGADPETFMGMAGLGDLVLTCTDNQSRNRRFGMMLGQGMDVQSAQDKIGQVVEGYRNTKEVRVLAQRLGVEMPITEEIYQVLYCGKIAREAALTLLGRARKDERSSN</sequence>
<protein>
    <recommendedName>
        <fullName evidence="1">Glycerol-3-phosphate dehydrogenase [NAD(P)+]</fullName>
        <ecNumber evidence="1">1.1.1.94</ecNumber>
    </recommendedName>
    <alternativeName>
        <fullName evidence="1">NAD(P)(+)-dependent glycerol-3-phosphate dehydrogenase</fullName>
    </alternativeName>
    <alternativeName>
        <fullName evidence="1">NAD(P)H-dependent dihydroxyacetone-phosphate reductase</fullName>
    </alternativeName>
</protein>
<evidence type="ECO:0000255" key="1">
    <source>
        <dbReference type="HAMAP-Rule" id="MF_00394"/>
    </source>
</evidence>
<accession>B5XTJ2</accession>